<protein>
    <recommendedName>
        <fullName evidence="1">Large ribosomal subunit protein bL28</fullName>
    </recommendedName>
    <alternativeName>
        <fullName evidence="2">50S ribosomal protein L28</fullName>
    </alternativeName>
</protein>
<proteinExistence type="inferred from homology"/>
<keyword id="KW-1185">Reference proteome</keyword>
<keyword id="KW-0687">Ribonucleoprotein</keyword>
<keyword id="KW-0689">Ribosomal protein</keyword>
<name>RL28_CALS4</name>
<dbReference type="EMBL" id="AE008691">
    <property type="protein sequence ID" value="AAM24713.1"/>
    <property type="molecule type" value="Genomic_DNA"/>
</dbReference>
<dbReference type="RefSeq" id="WP_011025755.1">
    <property type="nucleotide sequence ID" value="NZ_JANUCV010000001.1"/>
</dbReference>
<dbReference type="SMR" id="Q8R9U1"/>
<dbReference type="STRING" id="273068.TTE1495"/>
<dbReference type="KEGG" id="tte:TTE1495"/>
<dbReference type="eggNOG" id="COG0227">
    <property type="taxonomic scope" value="Bacteria"/>
</dbReference>
<dbReference type="HOGENOM" id="CLU_064548_7_0_9"/>
<dbReference type="OrthoDB" id="9805609at2"/>
<dbReference type="Proteomes" id="UP000000555">
    <property type="component" value="Chromosome"/>
</dbReference>
<dbReference type="GO" id="GO:1990904">
    <property type="term" value="C:ribonucleoprotein complex"/>
    <property type="evidence" value="ECO:0007669"/>
    <property type="project" value="UniProtKB-KW"/>
</dbReference>
<dbReference type="GO" id="GO:0005840">
    <property type="term" value="C:ribosome"/>
    <property type="evidence" value="ECO:0007669"/>
    <property type="project" value="UniProtKB-KW"/>
</dbReference>
<dbReference type="GO" id="GO:0003735">
    <property type="term" value="F:structural constituent of ribosome"/>
    <property type="evidence" value="ECO:0007669"/>
    <property type="project" value="InterPro"/>
</dbReference>
<dbReference type="GO" id="GO:0006412">
    <property type="term" value="P:translation"/>
    <property type="evidence" value="ECO:0007669"/>
    <property type="project" value="UniProtKB-UniRule"/>
</dbReference>
<dbReference type="Gene3D" id="2.30.170.40">
    <property type="entry name" value="Ribosomal protein L28/L24"/>
    <property type="match status" value="1"/>
</dbReference>
<dbReference type="HAMAP" id="MF_00373">
    <property type="entry name" value="Ribosomal_bL28"/>
    <property type="match status" value="1"/>
</dbReference>
<dbReference type="InterPro" id="IPR050096">
    <property type="entry name" value="Bacterial_rp_bL28"/>
</dbReference>
<dbReference type="InterPro" id="IPR026569">
    <property type="entry name" value="Ribosomal_bL28"/>
</dbReference>
<dbReference type="InterPro" id="IPR034704">
    <property type="entry name" value="Ribosomal_bL28/bL31-like_sf"/>
</dbReference>
<dbReference type="InterPro" id="IPR001383">
    <property type="entry name" value="Ribosomal_bL28_bact-type"/>
</dbReference>
<dbReference type="InterPro" id="IPR037147">
    <property type="entry name" value="Ribosomal_bL28_sf"/>
</dbReference>
<dbReference type="NCBIfam" id="TIGR00009">
    <property type="entry name" value="L28"/>
    <property type="match status" value="1"/>
</dbReference>
<dbReference type="PANTHER" id="PTHR39080">
    <property type="entry name" value="50S RIBOSOMAL PROTEIN L28"/>
    <property type="match status" value="1"/>
</dbReference>
<dbReference type="PANTHER" id="PTHR39080:SF1">
    <property type="entry name" value="LARGE RIBOSOMAL SUBUNIT PROTEIN BL28A"/>
    <property type="match status" value="1"/>
</dbReference>
<dbReference type="Pfam" id="PF00830">
    <property type="entry name" value="Ribosomal_L28"/>
    <property type="match status" value="1"/>
</dbReference>
<dbReference type="SUPFAM" id="SSF143800">
    <property type="entry name" value="L28p-like"/>
    <property type="match status" value="1"/>
</dbReference>
<feature type="chain" id="PRO_0000178578" description="Large ribosomal subunit protein bL28">
    <location>
        <begin position="1"/>
        <end position="62"/>
    </location>
</feature>
<reference key="1">
    <citation type="journal article" date="2002" name="Genome Res.">
        <title>A complete sequence of the T. tengcongensis genome.</title>
        <authorList>
            <person name="Bao Q."/>
            <person name="Tian Y."/>
            <person name="Li W."/>
            <person name="Xu Z."/>
            <person name="Xuan Z."/>
            <person name="Hu S."/>
            <person name="Dong W."/>
            <person name="Yang J."/>
            <person name="Chen Y."/>
            <person name="Xue Y."/>
            <person name="Xu Y."/>
            <person name="Lai X."/>
            <person name="Huang L."/>
            <person name="Dong X."/>
            <person name="Ma Y."/>
            <person name="Ling L."/>
            <person name="Tan H."/>
            <person name="Chen R."/>
            <person name="Wang J."/>
            <person name="Yu J."/>
            <person name="Yang H."/>
        </authorList>
    </citation>
    <scope>NUCLEOTIDE SEQUENCE [LARGE SCALE GENOMIC DNA]</scope>
    <source>
        <strain>DSM 15242 / JCM 11007 / NBRC 100824 / MB4</strain>
    </source>
</reference>
<accession>Q8R9U1</accession>
<evidence type="ECO:0000255" key="1">
    <source>
        <dbReference type="HAMAP-Rule" id="MF_00373"/>
    </source>
</evidence>
<evidence type="ECO:0000305" key="2"/>
<sequence>MPKCDICGKGSIRGFQYSHSNRRTIRRWKPNIRKVRAIVDGTHVTLNVCAKCLKAGKVQRAL</sequence>
<organism>
    <name type="scientific">Caldanaerobacter subterraneus subsp. tengcongensis (strain DSM 15242 / JCM 11007 / NBRC 100824 / MB4)</name>
    <name type="common">Thermoanaerobacter tengcongensis</name>
    <dbReference type="NCBI Taxonomy" id="273068"/>
    <lineage>
        <taxon>Bacteria</taxon>
        <taxon>Bacillati</taxon>
        <taxon>Bacillota</taxon>
        <taxon>Clostridia</taxon>
        <taxon>Thermoanaerobacterales</taxon>
        <taxon>Thermoanaerobacteraceae</taxon>
        <taxon>Caldanaerobacter</taxon>
    </lineage>
</organism>
<gene>
    <name evidence="1" type="primary">rpmB</name>
    <name type="ordered locus">TTE1495</name>
</gene>
<comment type="similarity">
    <text evidence="1">Belongs to the bacterial ribosomal protein bL28 family.</text>
</comment>